<name>NHAA_ALISL</name>
<organism>
    <name type="scientific">Aliivibrio salmonicida (strain LFI1238)</name>
    <name type="common">Vibrio salmonicida (strain LFI1238)</name>
    <dbReference type="NCBI Taxonomy" id="316275"/>
    <lineage>
        <taxon>Bacteria</taxon>
        <taxon>Pseudomonadati</taxon>
        <taxon>Pseudomonadota</taxon>
        <taxon>Gammaproteobacteria</taxon>
        <taxon>Vibrionales</taxon>
        <taxon>Vibrionaceae</taxon>
        <taxon>Aliivibrio</taxon>
    </lineage>
</organism>
<comment type="function">
    <text evidence="1">Na(+)/H(+) antiporter that extrudes sodium in exchange for external protons.</text>
</comment>
<comment type="catalytic activity">
    <reaction evidence="1">
        <text>Na(+)(in) + 2 H(+)(out) = Na(+)(out) + 2 H(+)(in)</text>
        <dbReference type="Rhea" id="RHEA:29251"/>
        <dbReference type="ChEBI" id="CHEBI:15378"/>
        <dbReference type="ChEBI" id="CHEBI:29101"/>
    </reaction>
    <physiologicalReaction direction="left-to-right" evidence="1">
        <dbReference type="Rhea" id="RHEA:29252"/>
    </physiologicalReaction>
</comment>
<comment type="subcellular location">
    <subcellularLocation>
        <location evidence="1">Cell inner membrane</location>
        <topology evidence="1">Multi-pass membrane protein</topology>
    </subcellularLocation>
</comment>
<comment type="similarity">
    <text evidence="1">Belongs to the NhaA Na(+)/H(+) (TC 2.A.33) antiporter family.</text>
</comment>
<sequence>MSDVIKNFFKLESAGGILLVIAAAIAMIIANSSFAPMYDTFLHTYLGGMSVSHWINDGLMAVFFLLIGLEVKRELLEGALKSKETAIFPAIAAVGGMLAPALVYVAFNMGDPEALSGWAIPAATDIAFALGIMALLGNRVPVSLKVFLLALAIIDDLGVVVIIAFFYTSDLSVLALVIGFVMTGILFLLNSKHVSKIRWYLLVGFILWVSVLQSGVHATLAGVVLGFAIPLKGKKGERSPLKHMEHALHPYVAFGILPLFAFANAGISLDGVSLDSLTTTLPLGVALGLFLGKPLGIFSFSYVAVKSGIAKLPAGVNMKHIFAVSVLCGIGFTMSIFISSLAFGGANPEFDKLARLGILMGSTLAAVVGYILLHISLPKKAA</sequence>
<gene>
    <name evidence="1" type="primary">nhaA</name>
    <name type="ordered locus">VSAL_I2026</name>
</gene>
<dbReference type="EMBL" id="FM178379">
    <property type="protein sequence ID" value="CAQ79711.1"/>
    <property type="molecule type" value="Genomic_DNA"/>
</dbReference>
<dbReference type="RefSeq" id="WP_012550573.1">
    <property type="nucleotide sequence ID" value="NC_011312.1"/>
</dbReference>
<dbReference type="SMR" id="B6EHQ0"/>
<dbReference type="KEGG" id="vsa:VSAL_I2026"/>
<dbReference type="eggNOG" id="COG3004">
    <property type="taxonomic scope" value="Bacteria"/>
</dbReference>
<dbReference type="HOGENOM" id="CLU_015803_1_0_6"/>
<dbReference type="Proteomes" id="UP000001730">
    <property type="component" value="Chromosome 1"/>
</dbReference>
<dbReference type="GO" id="GO:0005886">
    <property type="term" value="C:plasma membrane"/>
    <property type="evidence" value="ECO:0007669"/>
    <property type="project" value="UniProtKB-SubCell"/>
</dbReference>
<dbReference type="GO" id="GO:0015385">
    <property type="term" value="F:sodium:proton antiporter activity"/>
    <property type="evidence" value="ECO:0007669"/>
    <property type="project" value="TreeGrafter"/>
</dbReference>
<dbReference type="GO" id="GO:0006885">
    <property type="term" value="P:regulation of pH"/>
    <property type="evidence" value="ECO:0007669"/>
    <property type="project" value="InterPro"/>
</dbReference>
<dbReference type="Gene3D" id="1.20.1530.10">
    <property type="entry name" value="Na+/H+ antiporter like domain"/>
    <property type="match status" value="1"/>
</dbReference>
<dbReference type="HAMAP" id="MF_01844">
    <property type="entry name" value="NhaA"/>
    <property type="match status" value="1"/>
</dbReference>
<dbReference type="InterPro" id="IPR023171">
    <property type="entry name" value="Na/H_antiporter_dom_sf"/>
</dbReference>
<dbReference type="InterPro" id="IPR004670">
    <property type="entry name" value="NhaA"/>
</dbReference>
<dbReference type="NCBIfam" id="TIGR00773">
    <property type="entry name" value="NhaA"/>
    <property type="match status" value="1"/>
</dbReference>
<dbReference type="NCBIfam" id="NF007111">
    <property type="entry name" value="PRK09560.1"/>
    <property type="match status" value="1"/>
</dbReference>
<dbReference type="NCBIfam" id="NF007112">
    <property type="entry name" value="PRK09561.1"/>
    <property type="match status" value="1"/>
</dbReference>
<dbReference type="PANTHER" id="PTHR30341:SF0">
    <property type="entry name" value="NA(+)_H(+) ANTIPORTER NHAA"/>
    <property type="match status" value="1"/>
</dbReference>
<dbReference type="PANTHER" id="PTHR30341">
    <property type="entry name" value="SODIUM ION/PROTON ANTIPORTER NHAA-RELATED"/>
    <property type="match status" value="1"/>
</dbReference>
<dbReference type="Pfam" id="PF06965">
    <property type="entry name" value="Na_H_antiport_1"/>
    <property type="match status" value="1"/>
</dbReference>
<reference key="1">
    <citation type="journal article" date="2008" name="BMC Genomics">
        <title>The genome sequence of the fish pathogen Aliivibrio salmonicida strain LFI1238 shows extensive evidence of gene decay.</title>
        <authorList>
            <person name="Hjerde E."/>
            <person name="Lorentzen M.S."/>
            <person name="Holden M.T."/>
            <person name="Seeger K."/>
            <person name="Paulsen S."/>
            <person name="Bason N."/>
            <person name="Churcher C."/>
            <person name="Harris D."/>
            <person name="Norbertczak H."/>
            <person name="Quail M.A."/>
            <person name="Sanders S."/>
            <person name="Thurston S."/>
            <person name="Parkhill J."/>
            <person name="Willassen N.P."/>
            <person name="Thomson N.R."/>
        </authorList>
    </citation>
    <scope>NUCLEOTIDE SEQUENCE [LARGE SCALE GENOMIC DNA]</scope>
    <source>
        <strain>LFI1238</strain>
    </source>
</reference>
<feature type="chain" id="PRO_1000188432" description="Na(+)/H(+) antiporter NhaA">
    <location>
        <begin position="1"/>
        <end position="382"/>
    </location>
</feature>
<feature type="transmembrane region" description="Helical" evidence="1">
    <location>
        <begin position="14"/>
        <end position="34"/>
    </location>
</feature>
<feature type="transmembrane region" description="Helical" evidence="1">
    <location>
        <begin position="49"/>
        <end position="69"/>
    </location>
</feature>
<feature type="transmembrane region" description="Helical" evidence="1">
    <location>
        <begin position="87"/>
        <end position="107"/>
    </location>
</feature>
<feature type="transmembrane region" description="Helical" evidence="1">
    <location>
        <begin position="117"/>
        <end position="137"/>
    </location>
</feature>
<feature type="transmembrane region" description="Helical" evidence="1">
    <location>
        <begin position="146"/>
        <end position="166"/>
    </location>
</feature>
<feature type="transmembrane region" description="Helical" evidence="1">
    <location>
        <begin position="171"/>
        <end position="191"/>
    </location>
</feature>
<feature type="transmembrane region" description="Helical" evidence="1">
    <location>
        <begin position="205"/>
        <end position="225"/>
    </location>
</feature>
<feature type="transmembrane region" description="Helical" evidence="1">
    <location>
        <begin position="247"/>
        <end position="267"/>
    </location>
</feature>
<feature type="transmembrane region" description="Helical" evidence="1">
    <location>
        <begin position="285"/>
        <end position="305"/>
    </location>
</feature>
<feature type="transmembrane region" description="Helical" evidence="1">
    <location>
        <begin position="321"/>
        <end position="341"/>
    </location>
</feature>
<feature type="transmembrane region" description="Helical" evidence="1">
    <location>
        <begin position="356"/>
        <end position="376"/>
    </location>
</feature>
<evidence type="ECO:0000255" key="1">
    <source>
        <dbReference type="HAMAP-Rule" id="MF_01844"/>
    </source>
</evidence>
<accession>B6EHQ0</accession>
<keyword id="KW-0050">Antiport</keyword>
<keyword id="KW-0997">Cell inner membrane</keyword>
<keyword id="KW-1003">Cell membrane</keyword>
<keyword id="KW-0406">Ion transport</keyword>
<keyword id="KW-0472">Membrane</keyword>
<keyword id="KW-0915">Sodium</keyword>
<keyword id="KW-0739">Sodium transport</keyword>
<keyword id="KW-0812">Transmembrane</keyword>
<keyword id="KW-1133">Transmembrane helix</keyword>
<keyword id="KW-0813">Transport</keyword>
<protein>
    <recommendedName>
        <fullName evidence="1">Na(+)/H(+) antiporter NhaA</fullName>
    </recommendedName>
    <alternativeName>
        <fullName evidence="1">Sodium/proton antiporter NhaA</fullName>
    </alternativeName>
</protein>
<proteinExistence type="inferred from homology"/>